<organism>
    <name type="scientific">Clostridium tetani (strain Massachusetts / E88)</name>
    <dbReference type="NCBI Taxonomy" id="212717"/>
    <lineage>
        <taxon>Bacteria</taxon>
        <taxon>Bacillati</taxon>
        <taxon>Bacillota</taxon>
        <taxon>Clostridia</taxon>
        <taxon>Eubacteriales</taxon>
        <taxon>Clostridiaceae</taxon>
        <taxon>Clostridium</taxon>
    </lineage>
</organism>
<proteinExistence type="inferred from homology"/>
<feature type="chain" id="PRO_0000205081" description="Arginine repressor">
    <location>
        <begin position="1"/>
        <end position="153"/>
    </location>
</feature>
<evidence type="ECO:0000255" key="1">
    <source>
        <dbReference type="HAMAP-Rule" id="MF_00173"/>
    </source>
</evidence>
<gene>
    <name evidence="1" type="primary">argR</name>
    <name type="ordered locus">CTC_01572</name>
</gene>
<reference key="1">
    <citation type="journal article" date="2003" name="Proc. Natl. Acad. Sci. U.S.A.">
        <title>The genome sequence of Clostridium tetani, the causative agent of tetanus disease.</title>
        <authorList>
            <person name="Brueggemann H."/>
            <person name="Baeumer S."/>
            <person name="Fricke W.F."/>
            <person name="Wiezer A."/>
            <person name="Liesegang H."/>
            <person name="Decker I."/>
            <person name="Herzberg C."/>
            <person name="Martinez-Arias R."/>
            <person name="Merkl R."/>
            <person name="Henne A."/>
            <person name="Gottschalk G."/>
        </authorList>
    </citation>
    <scope>NUCLEOTIDE SEQUENCE [LARGE SCALE GENOMIC DNA]</scope>
    <source>
        <strain>Massachusetts / E88</strain>
    </source>
</reference>
<dbReference type="EMBL" id="AE015927">
    <property type="protein sequence ID" value="AAO36119.1"/>
    <property type="molecule type" value="Genomic_DNA"/>
</dbReference>
<dbReference type="RefSeq" id="WP_011099779.1">
    <property type="nucleotide sequence ID" value="NC_004557.1"/>
</dbReference>
<dbReference type="SMR" id="Q894H3"/>
<dbReference type="STRING" id="212717.CTC_01572"/>
<dbReference type="GeneID" id="24253900"/>
<dbReference type="KEGG" id="ctc:CTC_01572"/>
<dbReference type="HOGENOM" id="CLU_097103_3_0_9"/>
<dbReference type="OrthoDB" id="9807089at2"/>
<dbReference type="UniPathway" id="UPA00068"/>
<dbReference type="Proteomes" id="UP000001412">
    <property type="component" value="Chromosome"/>
</dbReference>
<dbReference type="GO" id="GO:0005737">
    <property type="term" value="C:cytoplasm"/>
    <property type="evidence" value="ECO:0007669"/>
    <property type="project" value="UniProtKB-SubCell"/>
</dbReference>
<dbReference type="GO" id="GO:0034618">
    <property type="term" value="F:arginine binding"/>
    <property type="evidence" value="ECO:0007669"/>
    <property type="project" value="InterPro"/>
</dbReference>
<dbReference type="GO" id="GO:0003677">
    <property type="term" value="F:DNA binding"/>
    <property type="evidence" value="ECO:0007669"/>
    <property type="project" value="UniProtKB-KW"/>
</dbReference>
<dbReference type="GO" id="GO:0003700">
    <property type="term" value="F:DNA-binding transcription factor activity"/>
    <property type="evidence" value="ECO:0007669"/>
    <property type="project" value="UniProtKB-UniRule"/>
</dbReference>
<dbReference type="GO" id="GO:0006526">
    <property type="term" value="P:L-arginine biosynthetic process"/>
    <property type="evidence" value="ECO:0007669"/>
    <property type="project" value="UniProtKB-UniPathway"/>
</dbReference>
<dbReference type="GO" id="GO:0051259">
    <property type="term" value="P:protein complex oligomerization"/>
    <property type="evidence" value="ECO:0007669"/>
    <property type="project" value="InterPro"/>
</dbReference>
<dbReference type="GO" id="GO:1900079">
    <property type="term" value="P:regulation of arginine biosynthetic process"/>
    <property type="evidence" value="ECO:0007669"/>
    <property type="project" value="UniProtKB-UniRule"/>
</dbReference>
<dbReference type="Gene3D" id="3.30.1360.40">
    <property type="match status" value="1"/>
</dbReference>
<dbReference type="Gene3D" id="1.10.10.10">
    <property type="entry name" value="Winged helix-like DNA-binding domain superfamily/Winged helix DNA-binding domain"/>
    <property type="match status" value="1"/>
</dbReference>
<dbReference type="HAMAP" id="MF_00173">
    <property type="entry name" value="Arg_repressor"/>
    <property type="match status" value="1"/>
</dbReference>
<dbReference type="InterPro" id="IPR001669">
    <property type="entry name" value="Arg_repress"/>
</dbReference>
<dbReference type="InterPro" id="IPR020899">
    <property type="entry name" value="Arg_repress_C"/>
</dbReference>
<dbReference type="InterPro" id="IPR036251">
    <property type="entry name" value="Arg_repress_C_sf"/>
</dbReference>
<dbReference type="InterPro" id="IPR020900">
    <property type="entry name" value="Arg_repress_DNA-bd"/>
</dbReference>
<dbReference type="InterPro" id="IPR036388">
    <property type="entry name" value="WH-like_DNA-bd_sf"/>
</dbReference>
<dbReference type="InterPro" id="IPR036390">
    <property type="entry name" value="WH_DNA-bd_sf"/>
</dbReference>
<dbReference type="NCBIfam" id="TIGR01529">
    <property type="entry name" value="argR_whole"/>
    <property type="match status" value="1"/>
</dbReference>
<dbReference type="NCBIfam" id="NF001680">
    <property type="entry name" value="PRK00441.1"/>
    <property type="match status" value="1"/>
</dbReference>
<dbReference type="PANTHER" id="PTHR34471">
    <property type="entry name" value="ARGININE REPRESSOR"/>
    <property type="match status" value="1"/>
</dbReference>
<dbReference type="PANTHER" id="PTHR34471:SF1">
    <property type="entry name" value="ARGININE REPRESSOR"/>
    <property type="match status" value="1"/>
</dbReference>
<dbReference type="Pfam" id="PF01316">
    <property type="entry name" value="Arg_repressor"/>
    <property type="match status" value="1"/>
</dbReference>
<dbReference type="Pfam" id="PF02863">
    <property type="entry name" value="Arg_repressor_C"/>
    <property type="match status" value="1"/>
</dbReference>
<dbReference type="PRINTS" id="PR01467">
    <property type="entry name" value="ARGREPRESSOR"/>
</dbReference>
<dbReference type="SUPFAM" id="SSF55252">
    <property type="entry name" value="C-terminal domain of arginine repressor"/>
    <property type="match status" value="1"/>
</dbReference>
<dbReference type="SUPFAM" id="SSF46785">
    <property type="entry name" value="Winged helix' DNA-binding domain"/>
    <property type="match status" value="1"/>
</dbReference>
<accession>Q894H3</accession>
<name>ARGR_CLOTE</name>
<keyword id="KW-0028">Amino-acid biosynthesis</keyword>
<keyword id="KW-0055">Arginine biosynthesis</keyword>
<keyword id="KW-0963">Cytoplasm</keyword>
<keyword id="KW-0238">DNA-binding</keyword>
<keyword id="KW-1185">Reference proteome</keyword>
<keyword id="KW-0678">Repressor</keyword>
<keyword id="KW-0804">Transcription</keyword>
<keyword id="KW-0805">Transcription regulation</keyword>
<protein>
    <recommendedName>
        <fullName evidence="1">Arginine repressor</fullName>
    </recommendedName>
</protein>
<comment type="function">
    <text evidence="1">Regulates arginine biosynthesis genes.</text>
</comment>
<comment type="pathway">
    <text>Amino-acid biosynthesis; L-arginine biosynthesis [regulation].</text>
</comment>
<comment type="subcellular location">
    <subcellularLocation>
        <location evidence="1">Cytoplasm</location>
    </subcellularLocation>
</comment>
<comment type="similarity">
    <text evidence="1">Belongs to the ArgR family.</text>
</comment>
<sequence>MKVTRHEKILELIERKDIETQEELAEELRKSGIEITQATVSRDIKELKLIKVLGEQGKYKYAAIVKNENDLSDKLANIFSHSVVSVENINNFVVVKTLSGSGNAAAEAIDSLNFKEIAGTIAGDNTIFIMARTSEQAFEIVKKMKRVIRERGV</sequence>